<proteinExistence type="inferred from homology"/>
<protein>
    <recommendedName>
        <fullName evidence="1">Large ribosomal subunit protein uL15</fullName>
    </recommendedName>
    <alternativeName>
        <fullName evidence="3">50S ribosomal protein L15</fullName>
    </alternativeName>
</protein>
<name>RL15_TREDE</name>
<accession>Q73PL3</accession>
<evidence type="ECO:0000255" key="1">
    <source>
        <dbReference type="HAMAP-Rule" id="MF_01341"/>
    </source>
</evidence>
<evidence type="ECO:0000256" key="2">
    <source>
        <dbReference type="SAM" id="MobiDB-lite"/>
    </source>
</evidence>
<evidence type="ECO:0000305" key="3"/>
<reference key="1">
    <citation type="journal article" date="2004" name="Proc. Natl. Acad. Sci. U.S.A.">
        <title>Comparison of the genome of the oral pathogen Treponema denticola with other spirochete genomes.</title>
        <authorList>
            <person name="Seshadri R."/>
            <person name="Myers G.S.A."/>
            <person name="Tettelin H."/>
            <person name="Eisen J.A."/>
            <person name="Heidelberg J.F."/>
            <person name="Dodson R.J."/>
            <person name="Davidsen T.M."/>
            <person name="DeBoy R.T."/>
            <person name="Fouts D.E."/>
            <person name="Haft D.H."/>
            <person name="Selengut J."/>
            <person name="Ren Q."/>
            <person name="Brinkac L.M."/>
            <person name="Madupu R."/>
            <person name="Kolonay J.F."/>
            <person name="Durkin S.A."/>
            <person name="Daugherty S.C."/>
            <person name="Shetty J."/>
            <person name="Shvartsbeyn A."/>
            <person name="Gebregeorgis E."/>
            <person name="Geer K."/>
            <person name="Tsegaye G."/>
            <person name="Malek J.A."/>
            <person name="Ayodeji B."/>
            <person name="Shatsman S."/>
            <person name="McLeod M.P."/>
            <person name="Smajs D."/>
            <person name="Howell J.K."/>
            <person name="Pal S."/>
            <person name="Amin A."/>
            <person name="Vashisth P."/>
            <person name="McNeill T.Z."/>
            <person name="Xiang Q."/>
            <person name="Sodergren E."/>
            <person name="Baca E."/>
            <person name="Weinstock G.M."/>
            <person name="Norris S.J."/>
            <person name="Fraser C.M."/>
            <person name="Paulsen I.T."/>
        </authorList>
    </citation>
    <scope>NUCLEOTIDE SEQUENCE [LARGE SCALE GENOMIC DNA]</scope>
    <source>
        <strain>ATCC 35405 / DSM 14222 / CIP 103919 / JCM 8153 / KCTC 15104</strain>
    </source>
</reference>
<feature type="chain" id="PRO_0000104847" description="Large ribosomal subunit protein uL15">
    <location>
        <begin position="1"/>
        <end position="150"/>
    </location>
</feature>
<feature type="region of interest" description="Disordered" evidence="2">
    <location>
        <begin position="18"/>
        <end position="43"/>
    </location>
</feature>
<comment type="function">
    <text evidence="1">Binds to the 23S rRNA.</text>
</comment>
<comment type="subunit">
    <text evidence="1">Part of the 50S ribosomal subunit.</text>
</comment>
<comment type="similarity">
    <text evidence="1">Belongs to the universal ribosomal protein uL15 family.</text>
</comment>
<gene>
    <name evidence="1" type="primary">rplO</name>
    <name type="ordered locus">TDE_0786</name>
</gene>
<keyword id="KW-1185">Reference proteome</keyword>
<keyword id="KW-0687">Ribonucleoprotein</keyword>
<keyword id="KW-0689">Ribosomal protein</keyword>
<keyword id="KW-0694">RNA-binding</keyword>
<keyword id="KW-0699">rRNA-binding</keyword>
<sequence>MFEFNLTVPAGATHKKKIVGRGSSSGWGKTSGKGHKGQQARSGGKVYAGFEGGQMPLYRRVAKKGFSNYPFKKEFYVVNLAMLETKYSDGETVNKESLMQKGLLRKGSLYVKVLGTGDITKKLTVDVDRISASAKEKIEKAGGTIVQSEA</sequence>
<dbReference type="EMBL" id="AE017226">
    <property type="protein sequence ID" value="AAS11277.1"/>
    <property type="molecule type" value="Genomic_DNA"/>
</dbReference>
<dbReference type="RefSeq" id="NP_971396.1">
    <property type="nucleotide sequence ID" value="NC_002967.9"/>
</dbReference>
<dbReference type="RefSeq" id="WP_002682039.1">
    <property type="nucleotide sequence ID" value="NC_002967.9"/>
</dbReference>
<dbReference type="SMR" id="Q73PL3"/>
<dbReference type="STRING" id="243275.TDE_0786"/>
<dbReference type="PaxDb" id="243275-TDE_0786"/>
<dbReference type="GeneID" id="2740664"/>
<dbReference type="KEGG" id="tde:TDE_0786"/>
<dbReference type="PATRIC" id="fig|243275.7.peg.759"/>
<dbReference type="eggNOG" id="COG0200">
    <property type="taxonomic scope" value="Bacteria"/>
</dbReference>
<dbReference type="HOGENOM" id="CLU_055188_4_2_12"/>
<dbReference type="OrthoDB" id="9810293at2"/>
<dbReference type="Proteomes" id="UP000008212">
    <property type="component" value="Chromosome"/>
</dbReference>
<dbReference type="GO" id="GO:0022625">
    <property type="term" value="C:cytosolic large ribosomal subunit"/>
    <property type="evidence" value="ECO:0007669"/>
    <property type="project" value="TreeGrafter"/>
</dbReference>
<dbReference type="GO" id="GO:0019843">
    <property type="term" value="F:rRNA binding"/>
    <property type="evidence" value="ECO:0007669"/>
    <property type="project" value="UniProtKB-UniRule"/>
</dbReference>
<dbReference type="GO" id="GO:0003735">
    <property type="term" value="F:structural constituent of ribosome"/>
    <property type="evidence" value="ECO:0007669"/>
    <property type="project" value="InterPro"/>
</dbReference>
<dbReference type="GO" id="GO:0006412">
    <property type="term" value="P:translation"/>
    <property type="evidence" value="ECO:0007669"/>
    <property type="project" value="UniProtKB-UniRule"/>
</dbReference>
<dbReference type="Gene3D" id="3.100.10.10">
    <property type="match status" value="1"/>
</dbReference>
<dbReference type="HAMAP" id="MF_01341">
    <property type="entry name" value="Ribosomal_uL15"/>
    <property type="match status" value="1"/>
</dbReference>
<dbReference type="InterPro" id="IPR030878">
    <property type="entry name" value="Ribosomal_uL15"/>
</dbReference>
<dbReference type="InterPro" id="IPR021131">
    <property type="entry name" value="Ribosomal_uL15/eL18"/>
</dbReference>
<dbReference type="InterPro" id="IPR036227">
    <property type="entry name" value="Ribosomal_uL15/eL18_sf"/>
</dbReference>
<dbReference type="InterPro" id="IPR005749">
    <property type="entry name" value="Ribosomal_uL15_bac-type"/>
</dbReference>
<dbReference type="InterPro" id="IPR001196">
    <property type="entry name" value="Ribosomal_uL15_CS"/>
</dbReference>
<dbReference type="NCBIfam" id="TIGR01071">
    <property type="entry name" value="rplO_bact"/>
    <property type="match status" value="1"/>
</dbReference>
<dbReference type="PANTHER" id="PTHR12934">
    <property type="entry name" value="50S RIBOSOMAL PROTEIN L15"/>
    <property type="match status" value="1"/>
</dbReference>
<dbReference type="PANTHER" id="PTHR12934:SF11">
    <property type="entry name" value="LARGE RIBOSOMAL SUBUNIT PROTEIN UL15M"/>
    <property type="match status" value="1"/>
</dbReference>
<dbReference type="Pfam" id="PF00828">
    <property type="entry name" value="Ribosomal_L27A"/>
    <property type="match status" value="1"/>
</dbReference>
<dbReference type="SUPFAM" id="SSF52080">
    <property type="entry name" value="Ribosomal proteins L15p and L18e"/>
    <property type="match status" value="1"/>
</dbReference>
<dbReference type="PROSITE" id="PS00475">
    <property type="entry name" value="RIBOSOMAL_L15"/>
    <property type="match status" value="1"/>
</dbReference>
<organism>
    <name type="scientific">Treponema denticola (strain ATCC 35405 / DSM 14222 / CIP 103919 / JCM 8153 / KCTC 15104)</name>
    <dbReference type="NCBI Taxonomy" id="243275"/>
    <lineage>
        <taxon>Bacteria</taxon>
        <taxon>Pseudomonadati</taxon>
        <taxon>Spirochaetota</taxon>
        <taxon>Spirochaetia</taxon>
        <taxon>Spirochaetales</taxon>
        <taxon>Treponemataceae</taxon>
        <taxon>Treponema</taxon>
    </lineage>
</organism>